<sequence>MGSCGAVGSVRARYLVFLQYLGTDFNGVAAVRGNPRAVGVLNFLEEAAKRLNSVDPVRFTISSRTDAGVHALSNAAHLDIQRRPGQSPFSPEVVAKALNTHLKHPAIRVLKAFRVPNDFHARHAATSRTYQYRLATGCSWPNQLPVFEQNVCWALQTEYLDMAAMQEAAQHLLGTHDFSAFQSAGSPVTNTVRTLRRVSVSPGPASPFVLPEGSRRLQFWTLEFESQSFLYRQVRRMTAVLVAVGLGILAPTQVKVILESQDPLGKYQARVAPARGLFLKSVLYDNFGPTS</sequence>
<protein>
    <recommendedName>
        <fullName>tRNA pseudouridine synthase-like 1</fullName>
        <ecNumber>5.4.99.-</ecNumber>
    </recommendedName>
    <alternativeName>
        <fullName>tRNA pseudouridylate synthase-like 1</fullName>
    </alternativeName>
    <alternativeName>
        <fullName>tRNA-uridine isomerase-like 1</fullName>
    </alternativeName>
</protein>
<proteinExistence type="evidence at protein level"/>
<reference key="1">
    <citation type="journal article" date="2005" name="Science">
        <title>The transcriptional landscape of the mammalian genome.</title>
        <authorList>
            <person name="Carninci P."/>
            <person name="Kasukawa T."/>
            <person name="Katayama S."/>
            <person name="Gough J."/>
            <person name="Frith M.C."/>
            <person name="Maeda N."/>
            <person name="Oyama R."/>
            <person name="Ravasi T."/>
            <person name="Lenhard B."/>
            <person name="Wells C."/>
            <person name="Kodzius R."/>
            <person name="Shimokawa K."/>
            <person name="Bajic V.B."/>
            <person name="Brenner S.E."/>
            <person name="Batalov S."/>
            <person name="Forrest A.R."/>
            <person name="Zavolan M."/>
            <person name="Davis M.J."/>
            <person name="Wilming L.G."/>
            <person name="Aidinis V."/>
            <person name="Allen J.E."/>
            <person name="Ambesi-Impiombato A."/>
            <person name="Apweiler R."/>
            <person name="Aturaliya R.N."/>
            <person name="Bailey T.L."/>
            <person name="Bansal M."/>
            <person name="Baxter L."/>
            <person name="Beisel K.W."/>
            <person name="Bersano T."/>
            <person name="Bono H."/>
            <person name="Chalk A.M."/>
            <person name="Chiu K.P."/>
            <person name="Choudhary V."/>
            <person name="Christoffels A."/>
            <person name="Clutterbuck D.R."/>
            <person name="Crowe M.L."/>
            <person name="Dalla E."/>
            <person name="Dalrymple B.P."/>
            <person name="de Bono B."/>
            <person name="Della Gatta G."/>
            <person name="di Bernardo D."/>
            <person name="Down T."/>
            <person name="Engstrom P."/>
            <person name="Fagiolini M."/>
            <person name="Faulkner G."/>
            <person name="Fletcher C.F."/>
            <person name="Fukushima T."/>
            <person name="Furuno M."/>
            <person name="Futaki S."/>
            <person name="Gariboldi M."/>
            <person name="Georgii-Hemming P."/>
            <person name="Gingeras T.R."/>
            <person name="Gojobori T."/>
            <person name="Green R.E."/>
            <person name="Gustincich S."/>
            <person name="Harbers M."/>
            <person name="Hayashi Y."/>
            <person name="Hensch T.K."/>
            <person name="Hirokawa N."/>
            <person name="Hill D."/>
            <person name="Huminiecki L."/>
            <person name="Iacono M."/>
            <person name="Ikeo K."/>
            <person name="Iwama A."/>
            <person name="Ishikawa T."/>
            <person name="Jakt M."/>
            <person name="Kanapin A."/>
            <person name="Katoh M."/>
            <person name="Kawasawa Y."/>
            <person name="Kelso J."/>
            <person name="Kitamura H."/>
            <person name="Kitano H."/>
            <person name="Kollias G."/>
            <person name="Krishnan S.P."/>
            <person name="Kruger A."/>
            <person name="Kummerfeld S.K."/>
            <person name="Kurochkin I.V."/>
            <person name="Lareau L.F."/>
            <person name="Lazarevic D."/>
            <person name="Lipovich L."/>
            <person name="Liu J."/>
            <person name="Liuni S."/>
            <person name="McWilliam S."/>
            <person name="Madan Babu M."/>
            <person name="Madera M."/>
            <person name="Marchionni L."/>
            <person name="Matsuda H."/>
            <person name="Matsuzawa S."/>
            <person name="Miki H."/>
            <person name="Mignone F."/>
            <person name="Miyake S."/>
            <person name="Morris K."/>
            <person name="Mottagui-Tabar S."/>
            <person name="Mulder N."/>
            <person name="Nakano N."/>
            <person name="Nakauchi H."/>
            <person name="Ng P."/>
            <person name="Nilsson R."/>
            <person name="Nishiguchi S."/>
            <person name="Nishikawa S."/>
            <person name="Nori F."/>
            <person name="Ohara O."/>
            <person name="Okazaki Y."/>
            <person name="Orlando V."/>
            <person name="Pang K.C."/>
            <person name="Pavan W.J."/>
            <person name="Pavesi G."/>
            <person name="Pesole G."/>
            <person name="Petrovsky N."/>
            <person name="Piazza S."/>
            <person name="Reed J."/>
            <person name="Reid J.F."/>
            <person name="Ring B.Z."/>
            <person name="Ringwald M."/>
            <person name="Rost B."/>
            <person name="Ruan Y."/>
            <person name="Salzberg S.L."/>
            <person name="Sandelin A."/>
            <person name="Schneider C."/>
            <person name="Schoenbach C."/>
            <person name="Sekiguchi K."/>
            <person name="Semple C.A."/>
            <person name="Seno S."/>
            <person name="Sessa L."/>
            <person name="Sheng Y."/>
            <person name="Shibata Y."/>
            <person name="Shimada H."/>
            <person name="Shimada K."/>
            <person name="Silva D."/>
            <person name="Sinclair B."/>
            <person name="Sperling S."/>
            <person name="Stupka E."/>
            <person name="Sugiura K."/>
            <person name="Sultana R."/>
            <person name="Takenaka Y."/>
            <person name="Taki K."/>
            <person name="Tammoja K."/>
            <person name="Tan S.L."/>
            <person name="Tang S."/>
            <person name="Taylor M.S."/>
            <person name="Tegner J."/>
            <person name="Teichmann S.A."/>
            <person name="Ueda H.R."/>
            <person name="van Nimwegen E."/>
            <person name="Verardo R."/>
            <person name="Wei C.L."/>
            <person name="Yagi K."/>
            <person name="Yamanishi H."/>
            <person name="Zabarovsky E."/>
            <person name="Zhu S."/>
            <person name="Zimmer A."/>
            <person name="Hide W."/>
            <person name="Bult C."/>
            <person name="Grimmond S.M."/>
            <person name="Teasdale R.D."/>
            <person name="Liu E.T."/>
            <person name="Brusic V."/>
            <person name="Quackenbush J."/>
            <person name="Wahlestedt C."/>
            <person name="Mattick J.S."/>
            <person name="Hume D.A."/>
            <person name="Kai C."/>
            <person name="Sasaki D."/>
            <person name="Tomaru Y."/>
            <person name="Fukuda S."/>
            <person name="Kanamori-Katayama M."/>
            <person name="Suzuki M."/>
            <person name="Aoki J."/>
            <person name="Arakawa T."/>
            <person name="Iida J."/>
            <person name="Imamura K."/>
            <person name="Itoh M."/>
            <person name="Kato T."/>
            <person name="Kawaji H."/>
            <person name="Kawagashira N."/>
            <person name="Kawashima T."/>
            <person name="Kojima M."/>
            <person name="Kondo S."/>
            <person name="Konno H."/>
            <person name="Nakano K."/>
            <person name="Ninomiya N."/>
            <person name="Nishio T."/>
            <person name="Okada M."/>
            <person name="Plessy C."/>
            <person name="Shibata K."/>
            <person name="Shiraki T."/>
            <person name="Suzuki S."/>
            <person name="Tagami M."/>
            <person name="Waki K."/>
            <person name="Watahiki A."/>
            <person name="Okamura-Oho Y."/>
            <person name="Suzuki H."/>
            <person name="Kawai J."/>
            <person name="Hayashizaki Y."/>
        </authorList>
    </citation>
    <scope>NUCLEOTIDE SEQUENCE [LARGE SCALE MRNA] (ISOFORMS 2 AND 3)</scope>
    <source>
        <strain>C57BL/6J</strain>
        <tissue>Bone marrow</tissue>
    </source>
</reference>
<reference key="2">
    <citation type="journal article" date="2009" name="PLoS Biol.">
        <title>Lineage-specific biology revealed by a finished genome assembly of the mouse.</title>
        <authorList>
            <person name="Church D.M."/>
            <person name="Goodstadt L."/>
            <person name="Hillier L.W."/>
            <person name="Zody M.C."/>
            <person name="Goldstein S."/>
            <person name="She X."/>
            <person name="Bult C.J."/>
            <person name="Agarwala R."/>
            <person name="Cherry J.L."/>
            <person name="DiCuccio M."/>
            <person name="Hlavina W."/>
            <person name="Kapustin Y."/>
            <person name="Meric P."/>
            <person name="Maglott D."/>
            <person name="Birtle Z."/>
            <person name="Marques A.C."/>
            <person name="Graves T."/>
            <person name="Zhou S."/>
            <person name="Teague B."/>
            <person name="Potamousis K."/>
            <person name="Churas C."/>
            <person name="Place M."/>
            <person name="Herschleb J."/>
            <person name="Runnheim R."/>
            <person name="Forrest D."/>
            <person name="Amos-Landgraf J."/>
            <person name="Schwartz D.C."/>
            <person name="Cheng Z."/>
            <person name="Lindblad-Toh K."/>
            <person name="Eichler E.E."/>
            <person name="Ponting C.P."/>
        </authorList>
    </citation>
    <scope>NUCLEOTIDE SEQUENCE [LARGE SCALE GENOMIC DNA]</scope>
    <source>
        <strain>C57BL/6J</strain>
    </source>
</reference>
<reference key="3">
    <citation type="journal article" date="2010" name="Cell">
        <title>A tissue-specific atlas of mouse protein phosphorylation and expression.</title>
        <authorList>
            <person name="Huttlin E.L."/>
            <person name="Jedrychowski M.P."/>
            <person name="Elias J.E."/>
            <person name="Goswami T."/>
            <person name="Rad R."/>
            <person name="Beausoleil S.A."/>
            <person name="Villen J."/>
            <person name="Haas W."/>
            <person name="Sowa M.E."/>
            <person name="Gygi S.P."/>
        </authorList>
    </citation>
    <scope>IDENTIFICATION BY MASS SPECTROMETRY [LARGE SCALE ANALYSIS]</scope>
    <source>
        <tissue>Spleen</tissue>
    </source>
</reference>
<comment type="catalytic activity">
    <reaction>
        <text>a uridine in tRNA = a pseudouridine in tRNA</text>
        <dbReference type="Rhea" id="RHEA:54572"/>
        <dbReference type="Rhea" id="RHEA-COMP:13339"/>
        <dbReference type="Rhea" id="RHEA-COMP:13934"/>
        <dbReference type="ChEBI" id="CHEBI:65314"/>
        <dbReference type="ChEBI" id="CHEBI:65315"/>
    </reaction>
</comment>
<comment type="alternative products">
    <event type="alternative splicing"/>
    <isoform>
        <id>A2ADA5-1</id>
        <name>1</name>
        <sequence type="displayed"/>
    </isoform>
    <isoform>
        <id>A2ADA5-2</id>
        <name>2</name>
        <sequence type="described" ref="VSP_036050 VSP_036051 VSP_036053"/>
    </isoform>
    <isoform>
        <id>A2ADA5-3</id>
        <name>3</name>
        <sequence type="described" ref="VSP_036049 VSP_036052 VSP_036054"/>
    </isoform>
</comment>
<comment type="similarity">
    <text evidence="3">Belongs to the tRNA pseudouridine synthase TruA family.</text>
</comment>
<feature type="chain" id="PRO_0000358316" description="tRNA pseudouridine synthase-like 1">
    <location>
        <begin position="1"/>
        <end position="291"/>
    </location>
</feature>
<feature type="active site" description="Nucleophile" evidence="1">
    <location>
        <position position="66"/>
    </location>
</feature>
<feature type="binding site" evidence="1">
    <location>
        <position position="130"/>
    </location>
    <ligand>
        <name>substrate</name>
    </ligand>
</feature>
<feature type="splice variant" id="VSP_036049" description="In isoform 3." evidence="2">
    <location>
        <begin position="1"/>
        <end position="65"/>
    </location>
</feature>
<feature type="splice variant" id="VSP_036050" description="In isoform 2." evidence="2">
    <location>
        <begin position="1"/>
        <end position="35"/>
    </location>
</feature>
<feature type="splice variant" id="VSP_036051" description="In isoform 2." evidence="2">
    <original>RAVGVLNFLE</original>
    <variation>MWQPPVRFPQ</variation>
    <location>
        <begin position="36"/>
        <end position="45"/>
    </location>
</feature>
<feature type="splice variant" id="VSP_036052" description="In isoform 3." evidence="2">
    <original>DAGV</original>
    <variation>MPGL</variation>
    <location>
        <begin position="66"/>
        <end position="69"/>
    </location>
</feature>
<feature type="splice variant" id="VSP_036053" description="In isoform 2." evidence="2">
    <original>R</original>
    <variation>RQVGCLNPHRMGSGRHTCDNLSSLL</variation>
    <location>
        <position position="232"/>
    </location>
</feature>
<feature type="splice variant" id="VSP_036054" description="In isoform 3." evidence="2">
    <original>KYQARVAPARGLFLKSVLYDNFGPTS</original>
    <variation>QVSGSSCSSPWPVLEVSAV</variation>
    <location>
        <begin position="266"/>
        <end position="291"/>
    </location>
</feature>
<keyword id="KW-0025">Alternative splicing</keyword>
<keyword id="KW-0413">Isomerase</keyword>
<keyword id="KW-1185">Reference proteome</keyword>
<keyword id="KW-0819">tRNA processing</keyword>
<gene>
    <name type="primary">Pusl1</name>
</gene>
<accession>A2ADA5</accession>
<accession>Q3TVB3</accession>
<accession>Q3UAA3</accession>
<evidence type="ECO:0000250" key="1"/>
<evidence type="ECO:0000303" key="2">
    <source>
    </source>
</evidence>
<evidence type="ECO:0000305" key="3"/>
<name>PUSL1_MOUSE</name>
<dbReference type="EC" id="5.4.99.-"/>
<dbReference type="EMBL" id="AK151452">
    <property type="protein sequence ID" value="BAE30412.1"/>
    <property type="molecule type" value="mRNA"/>
</dbReference>
<dbReference type="EMBL" id="AK160236">
    <property type="protein sequence ID" value="BAE35706.1"/>
    <property type="molecule type" value="mRNA"/>
</dbReference>
<dbReference type="EMBL" id="AL670236">
    <property type="status" value="NOT_ANNOTATED_CDS"/>
    <property type="molecule type" value="Genomic_DNA"/>
</dbReference>
<dbReference type="CCDS" id="CCDS51404.1">
    <molecule id="A2ADA5-1"/>
</dbReference>
<dbReference type="RefSeq" id="NP_001028662.1">
    <molecule id="A2ADA5-1"/>
    <property type="nucleotide sequence ID" value="NM_001033490.1"/>
</dbReference>
<dbReference type="RefSeq" id="XP_006539075.1">
    <property type="nucleotide sequence ID" value="XM_006539012.1"/>
</dbReference>
<dbReference type="SMR" id="A2ADA5"/>
<dbReference type="BioGRID" id="241456">
    <property type="interactions" value="2"/>
</dbReference>
<dbReference type="FunCoup" id="A2ADA5">
    <property type="interactions" value="1418"/>
</dbReference>
<dbReference type="STRING" id="10090.ENSMUSP00000095344"/>
<dbReference type="PhosphoSitePlus" id="A2ADA5"/>
<dbReference type="PaxDb" id="10090-ENSMUSP00000095344"/>
<dbReference type="PeptideAtlas" id="A2ADA5"/>
<dbReference type="ProteomicsDB" id="300358">
    <molecule id="A2ADA5-1"/>
</dbReference>
<dbReference type="ProteomicsDB" id="300359">
    <molecule id="A2ADA5-2"/>
</dbReference>
<dbReference type="ProteomicsDB" id="300360">
    <molecule id="A2ADA5-3"/>
</dbReference>
<dbReference type="Pumba" id="A2ADA5"/>
<dbReference type="Antibodypedia" id="26254">
    <property type="antibodies" value="70 antibodies from 17 providers"/>
</dbReference>
<dbReference type="Ensembl" id="ENSMUST00000097737.5">
    <molecule id="A2ADA5-1"/>
    <property type="protein sequence ID" value="ENSMUSP00000095344.5"/>
    <property type="gene ID" value="ENSMUSG00000051557.16"/>
</dbReference>
<dbReference type="GeneID" id="433813"/>
<dbReference type="KEGG" id="mmu:433813"/>
<dbReference type="UCSC" id="uc008wfi.1">
    <molecule id="A2ADA5-2"/>
    <property type="organism name" value="mouse"/>
</dbReference>
<dbReference type="UCSC" id="uc012drb.1">
    <molecule id="A2ADA5-1"/>
    <property type="organism name" value="mouse"/>
</dbReference>
<dbReference type="AGR" id="MGI:3047787"/>
<dbReference type="CTD" id="126789"/>
<dbReference type="MGI" id="MGI:3047787">
    <property type="gene designation" value="Pusl1"/>
</dbReference>
<dbReference type="VEuPathDB" id="HostDB:ENSMUSG00000051557"/>
<dbReference type="eggNOG" id="KOG4393">
    <property type="taxonomic scope" value="Eukaryota"/>
</dbReference>
<dbReference type="GeneTree" id="ENSGT00950000183160"/>
<dbReference type="HOGENOM" id="CLU_014673_3_1_1"/>
<dbReference type="InParanoid" id="A2ADA5"/>
<dbReference type="OMA" id="ADAFCHN"/>
<dbReference type="OrthoDB" id="271910at2759"/>
<dbReference type="PhylomeDB" id="A2ADA5"/>
<dbReference type="TreeFam" id="TF105127"/>
<dbReference type="BioGRID-ORCS" id="433813">
    <property type="hits" value="3 hits in 78 CRISPR screens"/>
</dbReference>
<dbReference type="ChiTaRS" id="Pusl1">
    <property type="organism name" value="mouse"/>
</dbReference>
<dbReference type="PRO" id="PR:A2ADA5"/>
<dbReference type="Proteomes" id="UP000000589">
    <property type="component" value="Chromosome 4"/>
</dbReference>
<dbReference type="RNAct" id="A2ADA5">
    <property type="molecule type" value="protein"/>
</dbReference>
<dbReference type="Bgee" id="ENSMUSG00000051557">
    <property type="expression patterns" value="Expressed in embryonic brain and 66 other cell types or tissues"/>
</dbReference>
<dbReference type="GO" id="GO:0005739">
    <property type="term" value="C:mitochondrion"/>
    <property type="evidence" value="ECO:0007669"/>
    <property type="project" value="Ensembl"/>
</dbReference>
<dbReference type="GO" id="GO:0003723">
    <property type="term" value="F:RNA binding"/>
    <property type="evidence" value="ECO:0007669"/>
    <property type="project" value="InterPro"/>
</dbReference>
<dbReference type="GO" id="GO:0106029">
    <property type="term" value="F:tRNA pseudouridine synthase activity"/>
    <property type="evidence" value="ECO:0007669"/>
    <property type="project" value="RHEA"/>
</dbReference>
<dbReference type="GO" id="GO:0001522">
    <property type="term" value="P:pseudouridine synthesis"/>
    <property type="evidence" value="ECO:0007669"/>
    <property type="project" value="InterPro"/>
</dbReference>
<dbReference type="GO" id="GO:0008033">
    <property type="term" value="P:tRNA processing"/>
    <property type="evidence" value="ECO:0007669"/>
    <property type="project" value="UniProtKB-KW"/>
</dbReference>
<dbReference type="CDD" id="cd02570">
    <property type="entry name" value="PseudoU_synth_EcTruA"/>
    <property type="match status" value="1"/>
</dbReference>
<dbReference type="FunFam" id="3.30.70.580:FF:000011">
    <property type="entry name" value="tRNA pseudouridine synthase"/>
    <property type="match status" value="1"/>
</dbReference>
<dbReference type="FunFam" id="3.30.70.660:FF:000006">
    <property type="entry name" value="tRNA pseudouridine synthase"/>
    <property type="match status" value="1"/>
</dbReference>
<dbReference type="Gene3D" id="3.30.70.660">
    <property type="entry name" value="Pseudouridine synthase I, catalytic domain, C-terminal subdomain"/>
    <property type="match status" value="1"/>
</dbReference>
<dbReference type="Gene3D" id="3.30.70.580">
    <property type="entry name" value="Pseudouridine synthase I, catalytic domain, N-terminal subdomain"/>
    <property type="match status" value="1"/>
</dbReference>
<dbReference type="HAMAP" id="MF_00171">
    <property type="entry name" value="TruA"/>
    <property type="match status" value="1"/>
</dbReference>
<dbReference type="InterPro" id="IPR020103">
    <property type="entry name" value="PsdUridine_synth_cat_dom_sf"/>
</dbReference>
<dbReference type="InterPro" id="IPR001406">
    <property type="entry name" value="PsdUridine_synth_TruA"/>
</dbReference>
<dbReference type="InterPro" id="IPR020097">
    <property type="entry name" value="PsdUridine_synth_TruA_a/b_dom"/>
</dbReference>
<dbReference type="InterPro" id="IPR020095">
    <property type="entry name" value="PsdUridine_synth_TruA_C"/>
</dbReference>
<dbReference type="InterPro" id="IPR020094">
    <property type="entry name" value="TruA/RsuA/RluB/E/F_N"/>
</dbReference>
<dbReference type="PANTHER" id="PTHR11142">
    <property type="entry name" value="PSEUDOURIDYLATE SYNTHASE"/>
    <property type="match status" value="1"/>
</dbReference>
<dbReference type="PANTHER" id="PTHR11142:SF0">
    <property type="entry name" value="TRNA PSEUDOURIDINE SYNTHASE-LIKE 1"/>
    <property type="match status" value="1"/>
</dbReference>
<dbReference type="Pfam" id="PF01416">
    <property type="entry name" value="PseudoU_synth_1"/>
    <property type="match status" value="2"/>
</dbReference>
<dbReference type="PIRSF" id="PIRSF001430">
    <property type="entry name" value="tRNA_psdUrid_synth"/>
    <property type="match status" value="1"/>
</dbReference>
<dbReference type="SUPFAM" id="SSF55120">
    <property type="entry name" value="Pseudouridine synthase"/>
    <property type="match status" value="1"/>
</dbReference>
<organism>
    <name type="scientific">Mus musculus</name>
    <name type="common">Mouse</name>
    <dbReference type="NCBI Taxonomy" id="10090"/>
    <lineage>
        <taxon>Eukaryota</taxon>
        <taxon>Metazoa</taxon>
        <taxon>Chordata</taxon>
        <taxon>Craniata</taxon>
        <taxon>Vertebrata</taxon>
        <taxon>Euteleostomi</taxon>
        <taxon>Mammalia</taxon>
        <taxon>Eutheria</taxon>
        <taxon>Euarchontoglires</taxon>
        <taxon>Glires</taxon>
        <taxon>Rodentia</taxon>
        <taxon>Myomorpha</taxon>
        <taxon>Muroidea</taxon>
        <taxon>Muridae</taxon>
        <taxon>Murinae</taxon>
        <taxon>Mus</taxon>
        <taxon>Mus</taxon>
    </lineage>
</organism>